<protein>
    <recommendedName>
        <fullName>Conolysin-Mt1</fullName>
    </recommendedName>
    <alternativeName>
        <fullName>Moonwalker peptide</fullName>
    </alternativeName>
    <component>
        <recommendedName>
            <fullName>Conolysin-Mt2</fullName>
        </recommendedName>
    </component>
</protein>
<feature type="peptide" id="PRO_0000366033" description="Conolysin-Mt1">
    <location>
        <begin position="1"/>
        <end position="23"/>
    </location>
</feature>
<feature type="peptide" id="PRO_0000366034" description="Conolysin-Mt2">
    <location>
        <begin position="1"/>
        <end position="22"/>
    </location>
</feature>
<feature type="modified residue" description="Serine amide" evidence="1">
    <location>
        <position position="22"/>
    </location>
</feature>
<evidence type="ECO:0000269" key="1">
    <source>
    </source>
</evidence>
<keyword id="KW-0027">Amidation</keyword>
<keyword id="KW-0044">Antibiotic</keyword>
<keyword id="KW-0929">Antimicrobial</keyword>
<keyword id="KW-0204">Cytolysis</keyword>
<keyword id="KW-0903">Direct protein sequencing</keyword>
<keyword id="KW-0354">Hemolysis</keyword>
<keyword id="KW-0964">Secreted</keyword>
<keyword id="KW-0800">Toxin</keyword>
<organism>
    <name type="scientific">Conus mustelinus</name>
    <name type="common">Weasel cone</name>
    <dbReference type="NCBI Taxonomy" id="101309"/>
    <lineage>
        <taxon>Eukaryota</taxon>
        <taxon>Metazoa</taxon>
        <taxon>Spiralia</taxon>
        <taxon>Lophotrochozoa</taxon>
        <taxon>Mollusca</taxon>
        <taxon>Gastropoda</taxon>
        <taxon>Caenogastropoda</taxon>
        <taxon>Neogastropoda</taxon>
        <taxon>Conoidea</taxon>
        <taxon>Conidae</taxon>
        <taxon>Conus</taxon>
        <taxon>Rhizoconus</taxon>
    </lineage>
</organism>
<accession>P0C8S6</accession>
<proteinExistence type="evidence at protein level"/>
<dbReference type="ConoServer" id="2746">
    <property type="toxin name" value="conolysin-Mt1"/>
</dbReference>
<dbReference type="GO" id="GO:0005576">
    <property type="term" value="C:extracellular region"/>
    <property type="evidence" value="ECO:0007669"/>
    <property type="project" value="UniProtKB-SubCell"/>
</dbReference>
<dbReference type="GO" id="GO:0090729">
    <property type="term" value="F:toxin activity"/>
    <property type="evidence" value="ECO:0007669"/>
    <property type="project" value="UniProtKB-KW"/>
</dbReference>
<dbReference type="GO" id="GO:0042742">
    <property type="term" value="P:defense response to bacterium"/>
    <property type="evidence" value="ECO:0007669"/>
    <property type="project" value="UniProtKB-KW"/>
</dbReference>
<dbReference type="GO" id="GO:0031640">
    <property type="term" value="P:killing of cells of another organism"/>
    <property type="evidence" value="ECO:0007669"/>
    <property type="project" value="UniProtKB-KW"/>
</dbReference>
<sequence>FHPSLWVLIPQYIQLIRKILKSG</sequence>
<name>CLY_CONMS</name>
<comment type="function">
    <text evidence="1">This cytolytic peptide has ability to disrupt the integrity of cell membranes from both prokaryotes and eukaryotes. It permeabilizes both negatively charged prokaryotic (PE:PG) and zwitterionic eukaryotic (PC:cholesterol) model membranes. It has potent hemolytic activity on human erythrocytes and exhibits low antimicrobial activity against the Gram-negative bacterium E.coli (MIC&gt;50 uM) and the Gram-positive bacterium S.aureus (MIC=25-50 uM). Intracranial injection causes mice to shuffle backward until the encounter an obstacle, at which time the mouse jump into the air. The backward shuffle is reminiscent to the signature dance 'moonwalk' that gained widespread popularity after being performed by Michael Jackson.</text>
</comment>
<comment type="subcellular location">
    <subcellularLocation>
        <location evidence="1">Secreted</location>
    </subcellularLocation>
</comment>
<comment type="tissue specificity">
    <text evidence="1">Expressed by the venom duct.</text>
</comment>
<comment type="mass spectrometry">
    <molecule>Conolysin-Mt1</molecule>
</comment>
<comment type="mass spectrometry">
    <molecule>Conolysin-Mt2</molecule>
</comment>
<comment type="miscellaneous">
    <text>The mature peptide does not contain cysteine residue.</text>
</comment>
<comment type="miscellaneous">
    <text>Mt1 and Mt2 peptides are found in a ratio of 1:4. Mt1 is more active when intracranially injected.</text>
</comment>
<reference key="1">
    <citation type="journal article" date="2007" name="Biochemistry">
        <title>Conolysin-Mt: a conus peptide that disrupts cellular membranes.</title>
        <authorList>
            <person name="Biggs J.S."/>
            <person name="Rosenfeld Y."/>
            <person name="Shai Y."/>
            <person name="Olivera B.M."/>
        </authorList>
    </citation>
    <scope>PROTEIN SEQUENCE</scope>
    <scope>SYNTHESIS</scope>
    <scope>FUNCTION</scope>
    <scope>SUBCELLULAR LOCATION</scope>
    <scope>TISSUE SPECIFICITY</scope>
    <scope>AMIDATION AT SER-22</scope>
    <scope>MASS SPECTROMETRY</scope>
    <source>
        <tissue>Venom</tissue>
    </source>
</reference>